<feature type="chain" id="PRO_1000010970" description="N-acetyl-gamma-glutamyl-phosphate reductase">
    <location>
        <begin position="1"/>
        <end position="343"/>
    </location>
</feature>
<feature type="active site" evidence="1">
    <location>
        <position position="146"/>
    </location>
</feature>
<proteinExistence type="inferred from homology"/>
<comment type="function">
    <text evidence="1">Catalyzes the NADPH-dependent reduction of N-acetyl-5-glutamyl phosphate to yield N-acetyl-L-glutamate 5-semialdehyde.</text>
</comment>
<comment type="catalytic activity">
    <reaction evidence="1">
        <text>N-acetyl-L-glutamate 5-semialdehyde + phosphate + NADP(+) = N-acetyl-L-glutamyl 5-phosphate + NADPH + H(+)</text>
        <dbReference type="Rhea" id="RHEA:21588"/>
        <dbReference type="ChEBI" id="CHEBI:15378"/>
        <dbReference type="ChEBI" id="CHEBI:29123"/>
        <dbReference type="ChEBI" id="CHEBI:43474"/>
        <dbReference type="ChEBI" id="CHEBI:57783"/>
        <dbReference type="ChEBI" id="CHEBI:57936"/>
        <dbReference type="ChEBI" id="CHEBI:58349"/>
        <dbReference type="EC" id="1.2.1.38"/>
    </reaction>
</comment>
<comment type="pathway">
    <text evidence="1">Amino-acid biosynthesis; L-arginine biosynthesis; N(2)-acetyl-L-ornithine from L-glutamate: step 3/4.</text>
</comment>
<comment type="subcellular location">
    <subcellularLocation>
        <location evidence="1">Cytoplasm</location>
    </subcellularLocation>
</comment>
<comment type="similarity">
    <text evidence="1">Belongs to the NAGSA dehydrogenase family. Type 1 subfamily.</text>
</comment>
<keyword id="KW-0028">Amino-acid biosynthesis</keyword>
<keyword id="KW-0055">Arginine biosynthesis</keyword>
<keyword id="KW-0963">Cytoplasm</keyword>
<keyword id="KW-0521">NADP</keyword>
<keyword id="KW-0560">Oxidoreductase</keyword>
<keyword id="KW-1185">Reference proteome</keyword>
<accession>A0LUC5</accession>
<gene>
    <name evidence="1" type="primary">argC</name>
    <name type="ordered locus">Acel_1263</name>
</gene>
<sequence length="343" mass="34898">MGARVAVAGASGYSGGELLRLIAAHPELELAVATAASHAGQPIGAVHPHLVDLADQVFAPTDPAVLGDADVVFLALPHGQSAAIAATLPESALVVDIGADFRLRDPAAWAKFYGGTHAGTWTYGLPELPGARAEIAKSRRIANPGCYVTAATLALAPLFAAHLVDPDDVVIVAASGTSGAGRSLKPNLLASEVMGSLAAYKVGGVHQHTPEIEQNLSQAAGEPVTVSFTPILAPLPRGILATCTARPKAGVDGDAIRAALANAYHDEPFVHLLPPDVWPQTAATLGSNSVHLQAAFDEAARRVVVVAALDNLTKGAAGQAIQNANIALGFPETTGLTRSGVAP</sequence>
<evidence type="ECO:0000255" key="1">
    <source>
        <dbReference type="HAMAP-Rule" id="MF_00150"/>
    </source>
</evidence>
<name>ARGC_ACIC1</name>
<protein>
    <recommendedName>
        <fullName evidence="1">N-acetyl-gamma-glutamyl-phosphate reductase</fullName>
        <shortName evidence="1">AGPR</shortName>
        <ecNumber evidence="1">1.2.1.38</ecNumber>
    </recommendedName>
    <alternativeName>
        <fullName evidence="1">N-acetyl-glutamate semialdehyde dehydrogenase</fullName>
        <shortName evidence="1">NAGSA dehydrogenase</shortName>
    </alternativeName>
</protein>
<organism>
    <name type="scientific">Acidothermus cellulolyticus (strain ATCC 43068 / DSM 8971 / 11B)</name>
    <dbReference type="NCBI Taxonomy" id="351607"/>
    <lineage>
        <taxon>Bacteria</taxon>
        <taxon>Bacillati</taxon>
        <taxon>Actinomycetota</taxon>
        <taxon>Actinomycetes</taxon>
        <taxon>Acidothermales</taxon>
        <taxon>Acidothermaceae</taxon>
        <taxon>Acidothermus</taxon>
    </lineage>
</organism>
<reference key="1">
    <citation type="journal article" date="2009" name="Genome Res.">
        <title>Complete genome of the cellulolytic thermophile Acidothermus cellulolyticus 11B provides insights into its ecophysiological and evolutionary adaptations.</title>
        <authorList>
            <person name="Barabote R.D."/>
            <person name="Xie G."/>
            <person name="Leu D.H."/>
            <person name="Normand P."/>
            <person name="Necsulea A."/>
            <person name="Daubin V."/>
            <person name="Medigue C."/>
            <person name="Adney W.S."/>
            <person name="Xu X.C."/>
            <person name="Lapidus A."/>
            <person name="Parales R.E."/>
            <person name="Detter C."/>
            <person name="Pujic P."/>
            <person name="Bruce D."/>
            <person name="Lavire C."/>
            <person name="Challacombe J.F."/>
            <person name="Brettin T.S."/>
            <person name="Berry A.M."/>
        </authorList>
    </citation>
    <scope>NUCLEOTIDE SEQUENCE [LARGE SCALE GENOMIC DNA]</scope>
    <source>
        <strain>ATCC 43068 / DSM 8971 / 11B</strain>
    </source>
</reference>
<dbReference type="EC" id="1.2.1.38" evidence="1"/>
<dbReference type="EMBL" id="CP000481">
    <property type="protein sequence ID" value="ABK53035.1"/>
    <property type="molecule type" value="Genomic_DNA"/>
</dbReference>
<dbReference type="RefSeq" id="WP_011720098.1">
    <property type="nucleotide sequence ID" value="NC_008578.1"/>
</dbReference>
<dbReference type="SMR" id="A0LUC5"/>
<dbReference type="FunCoup" id="A0LUC5">
    <property type="interactions" value="105"/>
</dbReference>
<dbReference type="STRING" id="351607.Acel_1263"/>
<dbReference type="KEGG" id="ace:Acel_1263"/>
<dbReference type="eggNOG" id="COG0002">
    <property type="taxonomic scope" value="Bacteria"/>
</dbReference>
<dbReference type="HOGENOM" id="CLU_006384_0_0_11"/>
<dbReference type="InParanoid" id="A0LUC5"/>
<dbReference type="OrthoDB" id="9801289at2"/>
<dbReference type="UniPathway" id="UPA00068">
    <property type="reaction ID" value="UER00108"/>
</dbReference>
<dbReference type="Proteomes" id="UP000008221">
    <property type="component" value="Chromosome"/>
</dbReference>
<dbReference type="GO" id="GO:0005737">
    <property type="term" value="C:cytoplasm"/>
    <property type="evidence" value="ECO:0007669"/>
    <property type="project" value="UniProtKB-SubCell"/>
</dbReference>
<dbReference type="GO" id="GO:0003942">
    <property type="term" value="F:N-acetyl-gamma-glutamyl-phosphate reductase activity"/>
    <property type="evidence" value="ECO:0007669"/>
    <property type="project" value="UniProtKB-UniRule"/>
</dbReference>
<dbReference type="GO" id="GO:0051287">
    <property type="term" value="F:NAD binding"/>
    <property type="evidence" value="ECO:0007669"/>
    <property type="project" value="InterPro"/>
</dbReference>
<dbReference type="GO" id="GO:0070401">
    <property type="term" value="F:NADP+ binding"/>
    <property type="evidence" value="ECO:0007669"/>
    <property type="project" value="InterPro"/>
</dbReference>
<dbReference type="GO" id="GO:0006526">
    <property type="term" value="P:L-arginine biosynthetic process"/>
    <property type="evidence" value="ECO:0007669"/>
    <property type="project" value="UniProtKB-UniRule"/>
</dbReference>
<dbReference type="CDD" id="cd24148">
    <property type="entry name" value="AGPR_1_actinobacAGPR_like"/>
    <property type="match status" value="1"/>
</dbReference>
<dbReference type="CDD" id="cd23934">
    <property type="entry name" value="AGPR_1_C"/>
    <property type="match status" value="1"/>
</dbReference>
<dbReference type="FunFam" id="3.30.360.10:FF:000014">
    <property type="entry name" value="N-acetyl-gamma-glutamyl-phosphate reductase"/>
    <property type="match status" value="1"/>
</dbReference>
<dbReference type="Gene3D" id="3.30.360.10">
    <property type="entry name" value="Dihydrodipicolinate Reductase, domain 2"/>
    <property type="match status" value="1"/>
</dbReference>
<dbReference type="Gene3D" id="3.40.50.720">
    <property type="entry name" value="NAD(P)-binding Rossmann-like Domain"/>
    <property type="match status" value="1"/>
</dbReference>
<dbReference type="HAMAP" id="MF_00150">
    <property type="entry name" value="ArgC_type1"/>
    <property type="match status" value="1"/>
</dbReference>
<dbReference type="InterPro" id="IPR023013">
    <property type="entry name" value="AGPR_AS"/>
</dbReference>
<dbReference type="InterPro" id="IPR000706">
    <property type="entry name" value="AGPR_type-1"/>
</dbReference>
<dbReference type="InterPro" id="IPR036291">
    <property type="entry name" value="NAD(P)-bd_dom_sf"/>
</dbReference>
<dbReference type="InterPro" id="IPR050085">
    <property type="entry name" value="NAGSA_dehydrogenase"/>
</dbReference>
<dbReference type="InterPro" id="IPR000534">
    <property type="entry name" value="Semialdehyde_DH_NAD-bd"/>
</dbReference>
<dbReference type="NCBIfam" id="TIGR01850">
    <property type="entry name" value="argC"/>
    <property type="match status" value="1"/>
</dbReference>
<dbReference type="PANTHER" id="PTHR32338:SF10">
    <property type="entry name" value="N-ACETYL-GAMMA-GLUTAMYL-PHOSPHATE REDUCTASE, CHLOROPLASTIC-RELATED"/>
    <property type="match status" value="1"/>
</dbReference>
<dbReference type="PANTHER" id="PTHR32338">
    <property type="entry name" value="N-ACETYL-GAMMA-GLUTAMYL-PHOSPHATE REDUCTASE, CHLOROPLASTIC-RELATED-RELATED"/>
    <property type="match status" value="1"/>
</dbReference>
<dbReference type="Pfam" id="PF01118">
    <property type="entry name" value="Semialdhyde_dh"/>
    <property type="match status" value="1"/>
</dbReference>
<dbReference type="Pfam" id="PF22698">
    <property type="entry name" value="Semialdhyde_dhC_1"/>
    <property type="match status" value="1"/>
</dbReference>
<dbReference type="SMART" id="SM00859">
    <property type="entry name" value="Semialdhyde_dh"/>
    <property type="match status" value="1"/>
</dbReference>
<dbReference type="SUPFAM" id="SSF55347">
    <property type="entry name" value="Glyceraldehyde-3-phosphate dehydrogenase-like, C-terminal domain"/>
    <property type="match status" value="1"/>
</dbReference>
<dbReference type="SUPFAM" id="SSF51735">
    <property type="entry name" value="NAD(P)-binding Rossmann-fold domains"/>
    <property type="match status" value="1"/>
</dbReference>
<dbReference type="PROSITE" id="PS01224">
    <property type="entry name" value="ARGC"/>
    <property type="match status" value="1"/>
</dbReference>